<dbReference type="EMBL" id="AP008937">
    <property type="protein sequence ID" value="BAG27086.1"/>
    <property type="molecule type" value="Genomic_DNA"/>
</dbReference>
<dbReference type="RefSeq" id="WP_012391111.1">
    <property type="nucleotide sequence ID" value="NC_010610.1"/>
</dbReference>
<dbReference type="SMR" id="B2GBQ4"/>
<dbReference type="KEGG" id="lfe:LAF_0750"/>
<dbReference type="eggNOG" id="COG0576">
    <property type="taxonomic scope" value="Bacteria"/>
</dbReference>
<dbReference type="HOGENOM" id="CLU_057217_6_3_9"/>
<dbReference type="Proteomes" id="UP000001697">
    <property type="component" value="Chromosome"/>
</dbReference>
<dbReference type="GO" id="GO:0005737">
    <property type="term" value="C:cytoplasm"/>
    <property type="evidence" value="ECO:0007669"/>
    <property type="project" value="UniProtKB-SubCell"/>
</dbReference>
<dbReference type="GO" id="GO:0000774">
    <property type="term" value="F:adenyl-nucleotide exchange factor activity"/>
    <property type="evidence" value="ECO:0007669"/>
    <property type="project" value="InterPro"/>
</dbReference>
<dbReference type="GO" id="GO:0042803">
    <property type="term" value="F:protein homodimerization activity"/>
    <property type="evidence" value="ECO:0007669"/>
    <property type="project" value="InterPro"/>
</dbReference>
<dbReference type="GO" id="GO:0051087">
    <property type="term" value="F:protein-folding chaperone binding"/>
    <property type="evidence" value="ECO:0007669"/>
    <property type="project" value="InterPro"/>
</dbReference>
<dbReference type="GO" id="GO:0051082">
    <property type="term" value="F:unfolded protein binding"/>
    <property type="evidence" value="ECO:0007669"/>
    <property type="project" value="TreeGrafter"/>
</dbReference>
<dbReference type="GO" id="GO:0006457">
    <property type="term" value="P:protein folding"/>
    <property type="evidence" value="ECO:0007669"/>
    <property type="project" value="InterPro"/>
</dbReference>
<dbReference type="CDD" id="cd00446">
    <property type="entry name" value="GrpE"/>
    <property type="match status" value="1"/>
</dbReference>
<dbReference type="FunFam" id="2.30.22.10:FF:000001">
    <property type="entry name" value="Protein GrpE"/>
    <property type="match status" value="1"/>
</dbReference>
<dbReference type="Gene3D" id="3.90.20.20">
    <property type="match status" value="1"/>
</dbReference>
<dbReference type="Gene3D" id="2.30.22.10">
    <property type="entry name" value="Head domain of nucleotide exchange factor GrpE"/>
    <property type="match status" value="1"/>
</dbReference>
<dbReference type="HAMAP" id="MF_01151">
    <property type="entry name" value="GrpE"/>
    <property type="match status" value="1"/>
</dbReference>
<dbReference type="InterPro" id="IPR000740">
    <property type="entry name" value="GrpE"/>
</dbReference>
<dbReference type="InterPro" id="IPR013805">
    <property type="entry name" value="GrpE_coiled_coil"/>
</dbReference>
<dbReference type="InterPro" id="IPR009012">
    <property type="entry name" value="GrpE_head"/>
</dbReference>
<dbReference type="NCBIfam" id="NF010738">
    <property type="entry name" value="PRK14140.1"/>
    <property type="match status" value="1"/>
</dbReference>
<dbReference type="NCBIfam" id="NF010759">
    <property type="entry name" value="PRK14162.1"/>
    <property type="match status" value="1"/>
</dbReference>
<dbReference type="PANTHER" id="PTHR21237">
    <property type="entry name" value="GRPE PROTEIN"/>
    <property type="match status" value="1"/>
</dbReference>
<dbReference type="PANTHER" id="PTHR21237:SF23">
    <property type="entry name" value="GRPE PROTEIN HOMOLOG, MITOCHONDRIAL"/>
    <property type="match status" value="1"/>
</dbReference>
<dbReference type="Pfam" id="PF01025">
    <property type="entry name" value="GrpE"/>
    <property type="match status" value="1"/>
</dbReference>
<dbReference type="PRINTS" id="PR00773">
    <property type="entry name" value="GRPEPROTEIN"/>
</dbReference>
<dbReference type="SUPFAM" id="SSF58014">
    <property type="entry name" value="Coiled-coil domain of nucleotide exchange factor GrpE"/>
    <property type="match status" value="1"/>
</dbReference>
<dbReference type="SUPFAM" id="SSF51064">
    <property type="entry name" value="Head domain of nucleotide exchange factor GrpE"/>
    <property type="match status" value="1"/>
</dbReference>
<dbReference type="PROSITE" id="PS01071">
    <property type="entry name" value="GRPE"/>
    <property type="match status" value="1"/>
</dbReference>
<accession>B2GBQ4</accession>
<feature type="chain" id="PRO_1000164196" description="Protein GrpE">
    <location>
        <begin position="1"/>
        <end position="195"/>
    </location>
</feature>
<feature type="region of interest" description="Disordered" evidence="2">
    <location>
        <begin position="1"/>
        <end position="60"/>
    </location>
</feature>
<feature type="compositionally biased region" description="Basic and acidic residues" evidence="2">
    <location>
        <begin position="37"/>
        <end position="60"/>
    </location>
</feature>
<evidence type="ECO:0000255" key="1">
    <source>
        <dbReference type="HAMAP-Rule" id="MF_01151"/>
    </source>
</evidence>
<evidence type="ECO:0000256" key="2">
    <source>
        <dbReference type="SAM" id="MobiDB-lite"/>
    </source>
</evidence>
<comment type="function">
    <text evidence="1">Participates actively in the response to hyperosmotic and heat shock by preventing the aggregation of stress-denatured proteins, in association with DnaK and GrpE. It is the nucleotide exchange factor for DnaK and may function as a thermosensor. Unfolded proteins bind initially to DnaJ; upon interaction with the DnaJ-bound protein, DnaK hydrolyzes its bound ATP, resulting in the formation of a stable complex. GrpE releases ADP from DnaK; ATP binding to DnaK triggers the release of the substrate protein, thus completing the reaction cycle. Several rounds of ATP-dependent interactions between DnaJ, DnaK and GrpE are required for fully efficient folding.</text>
</comment>
<comment type="subunit">
    <text evidence="1">Homodimer.</text>
</comment>
<comment type="subcellular location">
    <subcellularLocation>
        <location evidence="1">Cytoplasm</location>
    </subcellularLocation>
</comment>
<comment type="similarity">
    <text evidence="1">Belongs to the GrpE family.</text>
</comment>
<sequence length="195" mass="21672">MAKDEEKNSQASAAPNEGEVKAKQEQTSAKEPAAKAGETEKVADLQKQVEELTKQLDDQKDQNLRAQAEMQNMTKRFKKEQAQLLKYDGQDLAKGILPVLDNLKRALEIEVEDENGQQLKKGIQMVHDHLEKALADHDIKEVEALNQPFDPTTQQAVQTVAASGDQKPDTVVQVLQAGYVLHDRVLRPAMVIVAQ</sequence>
<name>GRPE_LIMF3</name>
<proteinExistence type="inferred from homology"/>
<protein>
    <recommendedName>
        <fullName evidence="1">Protein GrpE</fullName>
    </recommendedName>
    <alternativeName>
        <fullName evidence="1">HSP-70 cofactor</fullName>
    </alternativeName>
</protein>
<keyword id="KW-0143">Chaperone</keyword>
<keyword id="KW-0963">Cytoplasm</keyword>
<keyword id="KW-1185">Reference proteome</keyword>
<keyword id="KW-0346">Stress response</keyword>
<reference key="1">
    <citation type="journal article" date="2008" name="DNA Res.">
        <title>Comparative genome analysis of Lactobacillus reuteri and Lactobacillus fermentum reveal a genomic island for reuterin and cobalamin production.</title>
        <authorList>
            <person name="Morita H."/>
            <person name="Toh H."/>
            <person name="Fukuda S."/>
            <person name="Horikawa H."/>
            <person name="Oshima K."/>
            <person name="Suzuki T."/>
            <person name="Murakami M."/>
            <person name="Hisamatsu S."/>
            <person name="Kato Y."/>
            <person name="Takizawa T."/>
            <person name="Fukuoka H."/>
            <person name="Yoshimura T."/>
            <person name="Itoh K."/>
            <person name="O'Sullivan D.J."/>
            <person name="McKay L.L."/>
            <person name="Ohno H."/>
            <person name="Kikuchi J."/>
            <person name="Masaoka T."/>
            <person name="Hattori M."/>
        </authorList>
    </citation>
    <scope>NUCLEOTIDE SEQUENCE [LARGE SCALE GENOMIC DNA]</scope>
    <source>
        <strain>NBRC 3956 / LMG 18251</strain>
    </source>
</reference>
<gene>
    <name evidence="1" type="primary">grpE</name>
    <name type="ordered locus">LAF_0750</name>
</gene>
<organism>
    <name type="scientific">Limosilactobacillus fermentum (strain NBRC 3956 / LMG 18251)</name>
    <name type="common">Lactobacillus fermentum</name>
    <dbReference type="NCBI Taxonomy" id="334390"/>
    <lineage>
        <taxon>Bacteria</taxon>
        <taxon>Bacillati</taxon>
        <taxon>Bacillota</taxon>
        <taxon>Bacilli</taxon>
        <taxon>Lactobacillales</taxon>
        <taxon>Lactobacillaceae</taxon>
        <taxon>Limosilactobacillus</taxon>
    </lineage>
</organism>